<feature type="chain" id="PRO_1000059017" description="ATP-dependent protease subunit HslV">
    <location>
        <begin position="1"/>
        <end position="176"/>
    </location>
</feature>
<feature type="active site" evidence="1">
    <location>
        <position position="2"/>
    </location>
</feature>
<feature type="binding site" evidence="1">
    <location>
        <position position="157"/>
    </location>
    <ligand>
        <name>Na(+)</name>
        <dbReference type="ChEBI" id="CHEBI:29101"/>
    </ligand>
</feature>
<feature type="binding site" evidence="1">
    <location>
        <position position="160"/>
    </location>
    <ligand>
        <name>Na(+)</name>
        <dbReference type="ChEBI" id="CHEBI:29101"/>
    </ligand>
</feature>
<feature type="binding site" evidence="1">
    <location>
        <position position="163"/>
    </location>
    <ligand>
        <name>Na(+)</name>
        <dbReference type="ChEBI" id="CHEBI:29101"/>
    </ligand>
</feature>
<dbReference type="EC" id="3.4.25.2" evidence="1"/>
<dbReference type="EMBL" id="CP000653">
    <property type="protein sequence ID" value="ABP62696.1"/>
    <property type="molecule type" value="Genomic_DNA"/>
</dbReference>
<dbReference type="RefSeq" id="WP_015961000.1">
    <property type="nucleotide sequence ID" value="NC_009436.1"/>
</dbReference>
<dbReference type="SMR" id="A4WG66"/>
<dbReference type="STRING" id="399742.Ent638_4041"/>
<dbReference type="MEROPS" id="T01.006"/>
<dbReference type="KEGG" id="ent:Ent638_4041"/>
<dbReference type="eggNOG" id="COG5405">
    <property type="taxonomic scope" value="Bacteria"/>
</dbReference>
<dbReference type="HOGENOM" id="CLU_093872_1_0_6"/>
<dbReference type="OrthoDB" id="9804884at2"/>
<dbReference type="Proteomes" id="UP000000230">
    <property type="component" value="Chromosome"/>
</dbReference>
<dbReference type="GO" id="GO:0009376">
    <property type="term" value="C:HslUV protease complex"/>
    <property type="evidence" value="ECO:0007669"/>
    <property type="project" value="UniProtKB-UniRule"/>
</dbReference>
<dbReference type="GO" id="GO:0005839">
    <property type="term" value="C:proteasome core complex"/>
    <property type="evidence" value="ECO:0007669"/>
    <property type="project" value="InterPro"/>
</dbReference>
<dbReference type="GO" id="GO:0046872">
    <property type="term" value="F:metal ion binding"/>
    <property type="evidence" value="ECO:0007669"/>
    <property type="project" value="UniProtKB-KW"/>
</dbReference>
<dbReference type="GO" id="GO:0004298">
    <property type="term" value="F:threonine-type endopeptidase activity"/>
    <property type="evidence" value="ECO:0007669"/>
    <property type="project" value="UniProtKB-KW"/>
</dbReference>
<dbReference type="GO" id="GO:0051603">
    <property type="term" value="P:proteolysis involved in protein catabolic process"/>
    <property type="evidence" value="ECO:0007669"/>
    <property type="project" value="InterPro"/>
</dbReference>
<dbReference type="CDD" id="cd01913">
    <property type="entry name" value="protease_HslV"/>
    <property type="match status" value="1"/>
</dbReference>
<dbReference type="FunFam" id="3.60.20.10:FF:000002">
    <property type="entry name" value="ATP-dependent protease subunit HslV"/>
    <property type="match status" value="1"/>
</dbReference>
<dbReference type="Gene3D" id="3.60.20.10">
    <property type="entry name" value="Glutamine Phosphoribosylpyrophosphate, subunit 1, domain 1"/>
    <property type="match status" value="1"/>
</dbReference>
<dbReference type="HAMAP" id="MF_00248">
    <property type="entry name" value="HslV"/>
    <property type="match status" value="1"/>
</dbReference>
<dbReference type="InterPro" id="IPR022281">
    <property type="entry name" value="ATP-dep_Prtase_HsIV_su"/>
</dbReference>
<dbReference type="InterPro" id="IPR029055">
    <property type="entry name" value="Ntn_hydrolases_N"/>
</dbReference>
<dbReference type="InterPro" id="IPR001353">
    <property type="entry name" value="Proteasome_sua/b"/>
</dbReference>
<dbReference type="InterPro" id="IPR023333">
    <property type="entry name" value="Proteasome_suB-type"/>
</dbReference>
<dbReference type="NCBIfam" id="TIGR03692">
    <property type="entry name" value="ATP_dep_HslV"/>
    <property type="match status" value="1"/>
</dbReference>
<dbReference type="NCBIfam" id="NF003964">
    <property type="entry name" value="PRK05456.1"/>
    <property type="match status" value="1"/>
</dbReference>
<dbReference type="PANTHER" id="PTHR32194:SF0">
    <property type="entry name" value="ATP-DEPENDENT PROTEASE SUBUNIT HSLV"/>
    <property type="match status" value="1"/>
</dbReference>
<dbReference type="PANTHER" id="PTHR32194">
    <property type="entry name" value="METALLOPROTEASE TLDD"/>
    <property type="match status" value="1"/>
</dbReference>
<dbReference type="Pfam" id="PF00227">
    <property type="entry name" value="Proteasome"/>
    <property type="match status" value="1"/>
</dbReference>
<dbReference type="PIRSF" id="PIRSF039093">
    <property type="entry name" value="HslV"/>
    <property type="match status" value="1"/>
</dbReference>
<dbReference type="SUPFAM" id="SSF56235">
    <property type="entry name" value="N-terminal nucleophile aminohydrolases (Ntn hydrolases)"/>
    <property type="match status" value="1"/>
</dbReference>
<dbReference type="PROSITE" id="PS51476">
    <property type="entry name" value="PROTEASOME_BETA_2"/>
    <property type="match status" value="1"/>
</dbReference>
<name>HSLV_ENT38</name>
<comment type="function">
    <text evidence="1">Protease subunit of a proteasome-like degradation complex believed to be a general protein degrading machinery.</text>
</comment>
<comment type="catalytic activity">
    <reaction evidence="1">
        <text>ATP-dependent cleavage of peptide bonds with broad specificity.</text>
        <dbReference type="EC" id="3.4.25.2"/>
    </reaction>
</comment>
<comment type="activity regulation">
    <text evidence="1">Allosterically activated by HslU binding.</text>
</comment>
<comment type="subunit">
    <text evidence="1">A double ring-shaped homohexamer of HslV is capped on each side by a ring-shaped HslU homohexamer. The assembly of the HslU/HslV complex is dependent on binding of ATP.</text>
</comment>
<comment type="subcellular location">
    <subcellularLocation>
        <location evidence="1">Cytoplasm</location>
    </subcellularLocation>
</comment>
<comment type="similarity">
    <text evidence="1">Belongs to the peptidase T1B family. HslV subfamily.</text>
</comment>
<sequence>MTTIVSVRRNGHVVIAGDGQATLGNTVMKGNVKKVRRLYNDKVIAGFAGGTADAFTLFELFERKLEMHQGHLVKAAVELAKDWRTDRMLRKLEALLAVADENASLIITGNGDVIQPENDLIAIGSGGPYAQAAARALLENTELSAREIAEKALGIAGDICIYTNHFHTIEELNSKA</sequence>
<reference key="1">
    <citation type="journal article" date="2010" name="PLoS Genet.">
        <title>Genome sequence of the plant growth promoting endophytic bacterium Enterobacter sp. 638.</title>
        <authorList>
            <person name="Taghavi S."/>
            <person name="van der Lelie D."/>
            <person name="Hoffman A."/>
            <person name="Zhang Y.B."/>
            <person name="Walla M.D."/>
            <person name="Vangronsveld J."/>
            <person name="Newman L."/>
            <person name="Monchy S."/>
        </authorList>
    </citation>
    <scope>NUCLEOTIDE SEQUENCE [LARGE SCALE GENOMIC DNA]</scope>
    <source>
        <strain>638</strain>
    </source>
</reference>
<organism>
    <name type="scientific">Enterobacter sp. (strain 638)</name>
    <dbReference type="NCBI Taxonomy" id="399742"/>
    <lineage>
        <taxon>Bacteria</taxon>
        <taxon>Pseudomonadati</taxon>
        <taxon>Pseudomonadota</taxon>
        <taxon>Gammaproteobacteria</taxon>
        <taxon>Enterobacterales</taxon>
        <taxon>Enterobacteriaceae</taxon>
        <taxon>Enterobacter</taxon>
    </lineage>
</organism>
<gene>
    <name evidence="1" type="primary">hslV</name>
    <name type="ordered locus">Ent638_4041</name>
</gene>
<evidence type="ECO:0000255" key="1">
    <source>
        <dbReference type="HAMAP-Rule" id="MF_00248"/>
    </source>
</evidence>
<accession>A4WG66</accession>
<keyword id="KW-0021">Allosteric enzyme</keyword>
<keyword id="KW-0963">Cytoplasm</keyword>
<keyword id="KW-0378">Hydrolase</keyword>
<keyword id="KW-0479">Metal-binding</keyword>
<keyword id="KW-0645">Protease</keyword>
<keyword id="KW-0915">Sodium</keyword>
<keyword id="KW-0888">Threonine protease</keyword>
<proteinExistence type="inferred from homology"/>
<protein>
    <recommendedName>
        <fullName evidence="1">ATP-dependent protease subunit HslV</fullName>
        <ecNumber evidence="1">3.4.25.2</ecNumber>
    </recommendedName>
</protein>